<reference key="1">
    <citation type="journal article" date="2002" name="BMC Genomics">
        <title>Cynomolgus monkey testicular cDNAs for discovery of novel human genes in the human genome sequence.</title>
        <authorList>
            <person name="Osada N."/>
            <person name="Hida M."/>
            <person name="Kusuda J."/>
            <person name="Tanuma R."/>
            <person name="Hirata M."/>
            <person name="Suto Y."/>
            <person name="Hirai M."/>
            <person name="Terao K."/>
            <person name="Sugano S."/>
            <person name="Hashimoto K."/>
        </authorList>
    </citation>
    <scope>NUCLEOTIDE SEQUENCE [LARGE SCALE MRNA] (ISOFORM 2)</scope>
    <source>
        <tissue>Testis</tissue>
    </source>
</reference>
<reference key="2">
    <citation type="journal article" date="2011" name="Nat. Biotechnol.">
        <title>Genome sequencing and comparison of two nonhuman primate animal models, the cynomolgus and Chinese rhesus macaques.</title>
        <authorList>
            <person name="Yan G."/>
            <person name="Zhang G."/>
            <person name="Fang X."/>
            <person name="Zhang Y."/>
            <person name="Li C."/>
            <person name="Ling F."/>
            <person name="Cooper D.N."/>
            <person name="Li Q."/>
            <person name="Li Y."/>
            <person name="van Gool A.J."/>
            <person name="Du H."/>
            <person name="Chen J."/>
            <person name="Chen R."/>
            <person name="Zhang P."/>
            <person name="Huang Z."/>
            <person name="Thompson J.R."/>
            <person name="Meng Y."/>
            <person name="Bai Y."/>
            <person name="Wang J."/>
            <person name="Zhuo M."/>
            <person name="Wang T."/>
            <person name="Huang Y."/>
            <person name="Wei L."/>
            <person name="Li J."/>
            <person name="Wang Z."/>
            <person name="Hu H."/>
            <person name="Yang P."/>
            <person name="Le L."/>
            <person name="Stenson P.D."/>
            <person name="Li B."/>
            <person name="Liu X."/>
            <person name="Ball E.V."/>
            <person name="An N."/>
            <person name="Huang Q."/>
            <person name="Zhang Y."/>
            <person name="Fan W."/>
            <person name="Zhang X."/>
            <person name="Li Y."/>
            <person name="Wang W."/>
            <person name="Katze M.G."/>
            <person name="Su B."/>
            <person name="Nielsen R."/>
            <person name="Yang H."/>
            <person name="Wang J."/>
            <person name="Wang X."/>
            <person name="Wang J."/>
        </authorList>
    </citation>
    <scope>NUCLEOTIDE SEQUENCE [LARGE SCALE GENOMIC DNA]</scope>
</reference>
<dbReference type="EMBL" id="AB071102">
    <property type="protein sequence ID" value="BAB64496.1"/>
    <property type="status" value="ALT_TERM"/>
    <property type="molecule type" value="mRNA"/>
</dbReference>
<dbReference type="EMBL" id="CM001290">
    <property type="protein sequence ID" value="EHH57303.1"/>
    <property type="molecule type" value="Genomic_DNA"/>
</dbReference>
<dbReference type="RefSeq" id="XP_005581541.1">
    <property type="nucleotide sequence ID" value="XM_005581484.1"/>
</dbReference>
<dbReference type="RefSeq" id="XP_065387093.1">
    <molecule id="Q95LU0-1"/>
    <property type="nucleotide sequence ID" value="XM_065531021.1"/>
</dbReference>
<dbReference type="SMR" id="Q95LU0"/>
<dbReference type="STRING" id="9541.ENSMFAP00000039634"/>
<dbReference type="Ensembl" id="ENSMFAT00000013898.2">
    <molecule id="Q95LU0-1"/>
    <property type="protein sequence ID" value="ENSMFAP00000039634.1"/>
    <property type="gene ID" value="ENSMFAG00000046012.2"/>
</dbReference>
<dbReference type="GeneID" id="102115040"/>
<dbReference type="VEuPathDB" id="HostDB:ENSMFAG00000046012"/>
<dbReference type="eggNOG" id="ENOG502QRFQ">
    <property type="taxonomic scope" value="Eukaryota"/>
</dbReference>
<dbReference type="GeneTree" id="ENSGT00390000000945"/>
<dbReference type="OMA" id="QTMERHV"/>
<dbReference type="Proteomes" id="UP000009130">
    <property type="component" value="Chromosome 15"/>
</dbReference>
<dbReference type="Proteomes" id="UP000233100">
    <property type="component" value="Chromosome 15"/>
</dbReference>
<dbReference type="Bgee" id="ENSMFAG00000046012">
    <property type="expression patterns" value="Expressed in cerebellum"/>
</dbReference>
<dbReference type="GO" id="GO:0160111">
    <property type="term" value="C:axonemal A tubule inner sheath"/>
    <property type="evidence" value="ECO:0007669"/>
    <property type="project" value="Ensembl"/>
</dbReference>
<dbReference type="GO" id="GO:0005737">
    <property type="term" value="C:cytoplasm"/>
    <property type="evidence" value="ECO:0000250"/>
    <property type="project" value="UniProtKB"/>
</dbReference>
<dbReference type="GO" id="GO:0005829">
    <property type="term" value="C:cytosol"/>
    <property type="evidence" value="ECO:0007669"/>
    <property type="project" value="Ensembl"/>
</dbReference>
<dbReference type="GO" id="GO:0002177">
    <property type="term" value="C:manchette"/>
    <property type="evidence" value="ECO:0000250"/>
    <property type="project" value="UniProtKB"/>
</dbReference>
<dbReference type="GO" id="GO:0005739">
    <property type="term" value="C:mitochondrion"/>
    <property type="evidence" value="ECO:0000250"/>
    <property type="project" value="UniProtKB"/>
</dbReference>
<dbReference type="GO" id="GO:0005654">
    <property type="term" value="C:nucleoplasm"/>
    <property type="evidence" value="ECO:0007669"/>
    <property type="project" value="Ensembl"/>
</dbReference>
<dbReference type="GO" id="GO:0005634">
    <property type="term" value="C:nucleus"/>
    <property type="evidence" value="ECO:0000250"/>
    <property type="project" value="UniProtKB"/>
</dbReference>
<dbReference type="GO" id="GO:0048471">
    <property type="term" value="C:perinuclear region of cytoplasm"/>
    <property type="evidence" value="ECO:0000250"/>
    <property type="project" value="UniProtKB"/>
</dbReference>
<dbReference type="GO" id="GO:0097225">
    <property type="term" value="C:sperm midpiece"/>
    <property type="evidence" value="ECO:0000250"/>
    <property type="project" value="UniProtKB"/>
</dbReference>
<dbReference type="GO" id="GO:0043014">
    <property type="term" value="F:alpha-tubulin binding"/>
    <property type="evidence" value="ECO:0007669"/>
    <property type="project" value="Ensembl"/>
</dbReference>
<dbReference type="GO" id="GO:0030154">
    <property type="term" value="P:cell differentiation"/>
    <property type="evidence" value="ECO:0007669"/>
    <property type="project" value="UniProtKB-KW"/>
</dbReference>
<dbReference type="GO" id="GO:0030317">
    <property type="term" value="P:flagellated sperm motility"/>
    <property type="evidence" value="ECO:0007669"/>
    <property type="project" value="Ensembl"/>
</dbReference>
<dbReference type="GO" id="GO:0065003">
    <property type="term" value="P:protein-containing complex assembly"/>
    <property type="evidence" value="ECO:0007669"/>
    <property type="project" value="Ensembl"/>
</dbReference>
<dbReference type="GO" id="GO:0007283">
    <property type="term" value="P:spermatogenesis"/>
    <property type="evidence" value="ECO:0007669"/>
    <property type="project" value="UniProtKB-KW"/>
</dbReference>
<dbReference type="InterPro" id="IPR028195">
    <property type="entry name" value="SPMIP6"/>
</dbReference>
<dbReference type="PANTHER" id="PTHR35664">
    <property type="entry name" value="SPERMATID-SPECIFIC MANCHETTE-RELATED PROTEIN 1"/>
    <property type="match status" value="1"/>
</dbReference>
<dbReference type="PANTHER" id="PTHR35664:SF1">
    <property type="entry name" value="SPERMATID-SPECIFIC MANCHETTE-RELATED PROTEIN 1"/>
    <property type="match status" value="1"/>
</dbReference>
<dbReference type="Pfam" id="PF15181">
    <property type="entry name" value="SMRP1"/>
    <property type="match status" value="1"/>
</dbReference>
<protein>
    <recommendedName>
        <fullName>Sperm microtubule inner protein 6</fullName>
    </recommendedName>
    <alternativeName>
        <fullName>Ciliated bronchial epithelial protein 1</fullName>
    </alternativeName>
    <alternativeName>
        <fullName>Spermatid-specific manchette-related protein 1</fullName>
    </alternativeName>
    <alternativeName>
        <fullName>Testis development protein NYD-SP22</fullName>
    </alternativeName>
</protein>
<comment type="function">
    <text evidence="1">May participate in intramanchette transport and midpiece formation of the sperm tail. May play a potential role in somatic cell proliferation.</text>
</comment>
<comment type="subunit">
    <text evidence="1">Microtubule inner protein component of sperm flagellar doublet microtubules. Interacts with alpha-tubulin.</text>
</comment>
<comment type="subcellular location">
    <subcellularLocation>
        <location evidence="1">Cytoplasm</location>
        <location evidence="1">Cytoskeleton</location>
    </subcellularLocation>
    <subcellularLocation>
        <location evidence="2">Nucleus</location>
    </subcellularLocation>
    <subcellularLocation>
        <location evidence="1">Cytoplasm</location>
    </subcellularLocation>
    <subcellularLocation>
        <location evidence="1">Mitochondrion</location>
    </subcellularLocation>
    <subcellularLocation>
        <location evidence="1">Cytoplasm</location>
        <location evidence="1">Cytoskeleton</location>
        <location evidence="1">Flagellum axoneme</location>
    </subcellularLocation>
    <text evidence="1 2">During spermatid elongation (step 10), localizes along the length of the manchette and later during the elongation process only at the distal ends of spermatid manchette (step 12). In late elongated spermatids (step 16), in the final steps of spermiogenesis, localization is restricted to the midpiece of the flagellum. Localizes at the contractile ring in dividing cells (By similarity). Predominantly perinuclear in bronchial epithelial cells but also detected in the nucleus in some primary epithelial cells and in a number of cell lines (By similarity).</text>
</comment>
<comment type="alternative products">
    <event type="alternative splicing"/>
    <isoform>
        <id>Q95LU0-1</id>
        <name>1</name>
        <sequence type="displayed"/>
    </isoform>
    <isoform>
        <id>Q95LU0-2</id>
        <name>2</name>
        <sequence type="described" ref="VSP_042862"/>
    </isoform>
</comment>
<comment type="similarity">
    <text evidence="4">Belongs to the SPMIP6 family.</text>
</comment>
<comment type="sequence caution" evidence="4">
    <conflict type="erroneous termination">
        <sequence resource="EMBL-CDS" id="BAB64496"/>
    </conflict>
    <text>Truncated C-terminus.</text>
</comment>
<accession>Q95LU0</accession>
<accession>G7PS37</accession>
<feature type="chain" id="PRO_0000296259" description="Sperm microtubule inner protein 6">
    <location>
        <begin position="1"/>
        <end position="262"/>
    </location>
</feature>
<feature type="splice variant" id="VSP_042862" description="In isoform 2." evidence="3">
    <location>
        <begin position="137"/>
        <end position="143"/>
    </location>
</feature>
<feature type="sequence conflict" description="In Ref. 1; BAB64496." evidence="4" ref="1">
    <original>V</original>
    <variation>I</variation>
    <location>
        <position position="68"/>
    </location>
</feature>
<feature type="sequence conflict" description="In Ref. 1; BAB64496." evidence="4" ref="1">
    <original>N</original>
    <variation>S</variation>
    <location>
        <position position="164"/>
    </location>
</feature>
<organism>
    <name type="scientific">Macaca fascicularis</name>
    <name type="common">Crab-eating macaque</name>
    <name type="synonym">Cynomolgus monkey</name>
    <dbReference type="NCBI Taxonomy" id="9541"/>
    <lineage>
        <taxon>Eukaryota</taxon>
        <taxon>Metazoa</taxon>
        <taxon>Chordata</taxon>
        <taxon>Craniata</taxon>
        <taxon>Vertebrata</taxon>
        <taxon>Euteleostomi</taxon>
        <taxon>Mammalia</taxon>
        <taxon>Eutheria</taxon>
        <taxon>Euarchontoglires</taxon>
        <taxon>Primates</taxon>
        <taxon>Haplorrhini</taxon>
        <taxon>Catarrhini</taxon>
        <taxon>Cercopithecidae</taxon>
        <taxon>Cercopithecinae</taxon>
        <taxon>Macaca</taxon>
    </lineage>
</organism>
<evidence type="ECO:0000250" key="1">
    <source>
        <dbReference type="UniProtKB" id="Q2MH31"/>
    </source>
</evidence>
<evidence type="ECO:0000250" key="2">
    <source>
        <dbReference type="UniProtKB" id="Q8NCR6"/>
    </source>
</evidence>
<evidence type="ECO:0000303" key="3">
    <source>
    </source>
</evidence>
<evidence type="ECO:0000305" key="4"/>
<gene>
    <name type="primary">SPMIP6</name>
    <name type="synonym">C9orf24</name>
    <name type="synonym">CBE1</name>
    <name type="synonym">SMRP1</name>
    <name type="ORF">EGM_06900</name>
    <name type="ORF">QtsA-18012</name>
</gene>
<keyword id="KW-0025">Alternative splicing</keyword>
<keyword id="KW-0966">Cell projection</keyword>
<keyword id="KW-0969">Cilium</keyword>
<keyword id="KW-0963">Cytoplasm</keyword>
<keyword id="KW-0206">Cytoskeleton</keyword>
<keyword id="KW-0221">Differentiation</keyword>
<keyword id="KW-0282">Flagellum</keyword>
<keyword id="KW-0496">Mitochondrion</keyword>
<keyword id="KW-0539">Nucleus</keyword>
<keyword id="KW-1185">Reference proteome</keyword>
<keyword id="KW-0744">Spermatogenesis</keyword>
<name>SMIP6_MACFA</name>
<proteinExistence type="evidence at transcript level"/>
<sequence length="262" mass="29929">MFLFSRKTKTPISTYSDSYRAPTSIKEVYKDPPLCAWEANKFLTPGLTHTMEQHVDPEALQKMAKCAVQDYTYRGPISGHPYLPEKYWLSQEEADKCSPNYLGSNRYNTWRMEPYNSSCCNKYTTYLPRLPKEAGMETAVRGMPLECPPKPERLNAYEREVMVNMLNSLSRNQQLPRITPRCGCVDPLPGRLPFHGYESACSGRHYCLRGMDYYASGAPCTDRRLRPWCRELPTLCTSLRAPARNAVCCYNSPAVILPISEP</sequence>